<dbReference type="EMBL" id="CP001230">
    <property type="protein sequence ID" value="ACO04584.1"/>
    <property type="molecule type" value="Genomic_DNA"/>
</dbReference>
<dbReference type="RefSeq" id="WP_012676821.1">
    <property type="nucleotide sequence ID" value="NC_012440.1"/>
</dbReference>
<dbReference type="SMR" id="C0QU54"/>
<dbReference type="STRING" id="123214.PERMA_0429"/>
<dbReference type="PaxDb" id="123214-PERMA_0429"/>
<dbReference type="KEGG" id="pmx:PERMA_0429"/>
<dbReference type="eggNOG" id="COG0102">
    <property type="taxonomic scope" value="Bacteria"/>
</dbReference>
<dbReference type="HOGENOM" id="CLU_082184_2_2_0"/>
<dbReference type="OrthoDB" id="9801330at2"/>
<dbReference type="Proteomes" id="UP000001366">
    <property type="component" value="Chromosome"/>
</dbReference>
<dbReference type="GO" id="GO:0022625">
    <property type="term" value="C:cytosolic large ribosomal subunit"/>
    <property type="evidence" value="ECO:0007669"/>
    <property type="project" value="TreeGrafter"/>
</dbReference>
<dbReference type="GO" id="GO:0003729">
    <property type="term" value="F:mRNA binding"/>
    <property type="evidence" value="ECO:0007669"/>
    <property type="project" value="TreeGrafter"/>
</dbReference>
<dbReference type="GO" id="GO:0003735">
    <property type="term" value="F:structural constituent of ribosome"/>
    <property type="evidence" value="ECO:0007669"/>
    <property type="project" value="InterPro"/>
</dbReference>
<dbReference type="GO" id="GO:0017148">
    <property type="term" value="P:negative regulation of translation"/>
    <property type="evidence" value="ECO:0007669"/>
    <property type="project" value="TreeGrafter"/>
</dbReference>
<dbReference type="GO" id="GO:0006412">
    <property type="term" value="P:translation"/>
    <property type="evidence" value="ECO:0007669"/>
    <property type="project" value="UniProtKB-UniRule"/>
</dbReference>
<dbReference type="CDD" id="cd00392">
    <property type="entry name" value="Ribosomal_L13"/>
    <property type="match status" value="1"/>
</dbReference>
<dbReference type="FunFam" id="3.90.1180.10:FF:000001">
    <property type="entry name" value="50S ribosomal protein L13"/>
    <property type="match status" value="1"/>
</dbReference>
<dbReference type="Gene3D" id="3.90.1180.10">
    <property type="entry name" value="Ribosomal protein L13"/>
    <property type="match status" value="1"/>
</dbReference>
<dbReference type="HAMAP" id="MF_01366">
    <property type="entry name" value="Ribosomal_uL13"/>
    <property type="match status" value="1"/>
</dbReference>
<dbReference type="InterPro" id="IPR005822">
    <property type="entry name" value="Ribosomal_uL13"/>
</dbReference>
<dbReference type="InterPro" id="IPR005823">
    <property type="entry name" value="Ribosomal_uL13_bac-type"/>
</dbReference>
<dbReference type="InterPro" id="IPR036899">
    <property type="entry name" value="Ribosomal_uL13_sf"/>
</dbReference>
<dbReference type="NCBIfam" id="TIGR01066">
    <property type="entry name" value="rplM_bact"/>
    <property type="match status" value="1"/>
</dbReference>
<dbReference type="PANTHER" id="PTHR11545:SF2">
    <property type="entry name" value="LARGE RIBOSOMAL SUBUNIT PROTEIN UL13M"/>
    <property type="match status" value="1"/>
</dbReference>
<dbReference type="PANTHER" id="PTHR11545">
    <property type="entry name" value="RIBOSOMAL PROTEIN L13"/>
    <property type="match status" value="1"/>
</dbReference>
<dbReference type="Pfam" id="PF00572">
    <property type="entry name" value="Ribosomal_L13"/>
    <property type="match status" value="1"/>
</dbReference>
<dbReference type="PIRSF" id="PIRSF002181">
    <property type="entry name" value="Ribosomal_L13"/>
    <property type="match status" value="1"/>
</dbReference>
<dbReference type="SUPFAM" id="SSF52161">
    <property type="entry name" value="Ribosomal protein L13"/>
    <property type="match status" value="1"/>
</dbReference>
<gene>
    <name evidence="1" type="primary">rplM</name>
    <name type="ordered locus">PERMA_0429</name>
</gene>
<sequence length="150" mass="17644">MKTIDARKLDIKREWYVIDATGKNLGRLATLIANILRGKHKPYFQPDVDVGDFVIVLNADKITVTGKKLTDKEYKWHTNRPGGLNVRTLQWMLEHKPEEVIRLAVERMLPKNKLQKRFMKRLKVYTGSEHKHQAQNPKNLEELKALWKNF</sequence>
<evidence type="ECO:0000255" key="1">
    <source>
        <dbReference type="HAMAP-Rule" id="MF_01366"/>
    </source>
</evidence>
<evidence type="ECO:0000305" key="2"/>
<organism>
    <name type="scientific">Persephonella marina (strain DSM 14350 / EX-H1)</name>
    <dbReference type="NCBI Taxonomy" id="123214"/>
    <lineage>
        <taxon>Bacteria</taxon>
        <taxon>Pseudomonadati</taxon>
        <taxon>Aquificota</taxon>
        <taxon>Aquificia</taxon>
        <taxon>Aquificales</taxon>
        <taxon>Hydrogenothermaceae</taxon>
        <taxon>Persephonella</taxon>
    </lineage>
</organism>
<feature type="chain" id="PRO_1000166879" description="Large ribosomal subunit protein uL13">
    <location>
        <begin position="1"/>
        <end position="150"/>
    </location>
</feature>
<accession>C0QU54</accession>
<proteinExistence type="inferred from homology"/>
<reference key="1">
    <citation type="journal article" date="2009" name="J. Bacteriol.">
        <title>Complete and draft genome sequences of six members of the Aquificales.</title>
        <authorList>
            <person name="Reysenbach A.-L."/>
            <person name="Hamamura N."/>
            <person name="Podar M."/>
            <person name="Griffiths E."/>
            <person name="Ferreira S."/>
            <person name="Hochstein R."/>
            <person name="Heidelberg J."/>
            <person name="Johnson J."/>
            <person name="Mead D."/>
            <person name="Pohorille A."/>
            <person name="Sarmiento M."/>
            <person name="Schweighofer K."/>
            <person name="Seshadri R."/>
            <person name="Voytek M.A."/>
        </authorList>
    </citation>
    <scope>NUCLEOTIDE SEQUENCE [LARGE SCALE GENOMIC DNA]</scope>
    <source>
        <strain>DSM 14350 / EX-H1</strain>
    </source>
</reference>
<keyword id="KW-1185">Reference proteome</keyword>
<keyword id="KW-0687">Ribonucleoprotein</keyword>
<keyword id="KW-0689">Ribosomal protein</keyword>
<comment type="function">
    <text evidence="1">This protein is one of the early assembly proteins of the 50S ribosomal subunit, although it is not seen to bind rRNA by itself. It is important during the early stages of 50S assembly.</text>
</comment>
<comment type="subunit">
    <text evidence="1">Part of the 50S ribosomal subunit.</text>
</comment>
<comment type="similarity">
    <text evidence="1">Belongs to the universal ribosomal protein uL13 family.</text>
</comment>
<protein>
    <recommendedName>
        <fullName evidence="1">Large ribosomal subunit protein uL13</fullName>
    </recommendedName>
    <alternativeName>
        <fullName evidence="2">50S ribosomal protein L13</fullName>
    </alternativeName>
</protein>
<name>RL13_PERMH</name>